<feature type="chain" id="PRO_0000088001" description="Type I restriction enzyme MjaVIII methylase subunit">
    <location>
        <begin position="1"/>
        <end position="578"/>
    </location>
</feature>
<feature type="binding site" evidence="2">
    <location>
        <begin position="250"/>
        <end position="255"/>
    </location>
    <ligand>
        <name>S-adenosyl-L-methionine</name>
        <dbReference type="ChEBI" id="CHEBI:59789"/>
    </ligand>
</feature>
<feature type="binding site" evidence="2">
    <location>
        <begin position="280"/>
        <end position="282"/>
    </location>
    <ligand>
        <name>S-adenosyl-L-methionine</name>
        <dbReference type="ChEBI" id="CHEBI:59789"/>
    </ligand>
</feature>
<feature type="binding site" evidence="4">
    <location>
        <position position="303"/>
    </location>
    <ligand>
        <name>S-adenosyl-L-methionine</name>
        <dbReference type="ChEBI" id="CHEBI:59789"/>
    </ligand>
</feature>
<feature type="binding site" evidence="2">
    <location>
        <begin position="332"/>
        <end position="333"/>
    </location>
    <ligand>
        <name>S-adenosyl-L-methionine</name>
        <dbReference type="ChEBI" id="CHEBI:59789"/>
    </ligand>
</feature>
<accession>Q58617</accession>
<dbReference type="EC" id="2.1.1.72" evidence="1"/>
<dbReference type="EMBL" id="L77117">
    <property type="protein sequence ID" value="AAB99225.1"/>
    <property type="molecule type" value="Genomic_DNA"/>
</dbReference>
<dbReference type="PIR" id="C64452">
    <property type="entry name" value="C64452"/>
</dbReference>
<dbReference type="RefSeq" id="WP_010870732.1">
    <property type="nucleotide sequence ID" value="NC_000909.1"/>
</dbReference>
<dbReference type="STRING" id="243232.MJ_1220"/>
<dbReference type="REBASE" id="182832">
    <property type="entry name" value="M.Bli37I"/>
</dbReference>
<dbReference type="REBASE" id="3905">
    <property type="entry name" value="M.MjaVIII"/>
</dbReference>
<dbReference type="PaxDb" id="243232-MJ_1220"/>
<dbReference type="EnsemblBacteria" id="AAB99225">
    <property type="protein sequence ID" value="AAB99225"/>
    <property type="gene ID" value="MJ_1220"/>
</dbReference>
<dbReference type="GeneID" id="1452116"/>
<dbReference type="KEGG" id="mja:MJ_1220"/>
<dbReference type="eggNOG" id="arCOG02632">
    <property type="taxonomic scope" value="Archaea"/>
</dbReference>
<dbReference type="HOGENOM" id="CLU_013049_4_2_2"/>
<dbReference type="InParanoid" id="Q58617"/>
<dbReference type="OrthoDB" id="45790at2157"/>
<dbReference type="PhylomeDB" id="Q58617"/>
<dbReference type="Proteomes" id="UP000000805">
    <property type="component" value="Chromosome"/>
</dbReference>
<dbReference type="GO" id="GO:0003677">
    <property type="term" value="F:DNA binding"/>
    <property type="evidence" value="ECO:0007669"/>
    <property type="project" value="UniProtKB-KW"/>
</dbReference>
<dbReference type="GO" id="GO:0008170">
    <property type="term" value="F:N-methyltransferase activity"/>
    <property type="evidence" value="ECO:0007669"/>
    <property type="project" value="InterPro"/>
</dbReference>
<dbReference type="GO" id="GO:0009007">
    <property type="term" value="F:site-specific DNA-methyltransferase (adenine-specific) activity"/>
    <property type="evidence" value="ECO:0007669"/>
    <property type="project" value="UniProtKB-EC"/>
</dbReference>
<dbReference type="GO" id="GO:0009307">
    <property type="term" value="P:DNA restriction-modification system"/>
    <property type="evidence" value="ECO:0007669"/>
    <property type="project" value="UniProtKB-KW"/>
</dbReference>
<dbReference type="GO" id="GO:0032259">
    <property type="term" value="P:methylation"/>
    <property type="evidence" value="ECO:0007669"/>
    <property type="project" value="UniProtKB-KW"/>
</dbReference>
<dbReference type="Gene3D" id="1.20.1260.30">
    <property type="match status" value="1"/>
</dbReference>
<dbReference type="Gene3D" id="3.40.50.150">
    <property type="entry name" value="Vaccinia Virus protein VP39"/>
    <property type="match status" value="1"/>
</dbReference>
<dbReference type="InterPro" id="IPR051537">
    <property type="entry name" value="DNA_Adenine_Mtase"/>
</dbReference>
<dbReference type="InterPro" id="IPR003356">
    <property type="entry name" value="DNA_methylase_A-5"/>
</dbReference>
<dbReference type="InterPro" id="IPR002052">
    <property type="entry name" value="DNA_methylase_N6_adenine_CS"/>
</dbReference>
<dbReference type="InterPro" id="IPR029063">
    <property type="entry name" value="SAM-dependent_MTases_sf"/>
</dbReference>
<dbReference type="InterPro" id="IPR038333">
    <property type="entry name" value="T1MK-like_N_sf"/>
</dbReference>
<dbReference type="PANTHER" id="PTHR42933">
    <property type="entry name" value="SLR6095 PROTEIN"/>
    <property type="match status" value="1"/>
</dbReference>
<dbReference type="PANTHER" id="PTHR42933:SF3">
    <property type="entry name" value="TYPE I RESTRICTION ENZYME MJAVIII METHYLASE SUBUNIT"/>
    <property type="match status" value="1"/>
</dbReference>
<dbReference type="Pfam" id="PF02384">
    <property type="entry name" value="N6_Mtase"/>
    <property type="match status" value="1"/>
</dbReference>
<dbReference type="PRINTS" id="PR00507">
    <property type="entry name" value="N12N6MTFRASE"/>
</dbReference>
<dbReference type="SUPFAM" id="SSF53335">
    <property type="entry name" value="S-adenosyl-L-methionine-dependent methyltransferases"/>
    <property type="match status" value="1"/>
</dbReference>
<dbReference type="PROSITE" id="PS00092">
    <property type="entry name" value="N6_MTASE"/>
    <property type="match status" value="1"/>
</dbReference>
<name>T1M2_METJA</name>
<proteinExistence type="inferred from homology"/>
<evidence type="ECO:0000250" key="1">
    <source>
        <dbReference type="UniProtKB" id="P08957"/>
    </source>
</evidence>
<evidence type="ECO:0000250" key="2">
    <source>
        <dbReference type="UniProtKB" id="Q89Z59"/>
    </source>
</evidence>
<evidence type="ECO:0000303" key="3">
    <source>
    </source>
</evidence>
<evidence type="ECO:0000305" key="4"/>
<reference key="1">
    <citation type="journal article" date="1996" name="Science">
        <title>Complete genome sequence of the methanogenic archaeon, Methanococcus jannaschii.</title>
        <authorList>
            <person name="Bult C.J."/>
            <person name="White O."/>
            <person name="Olsen G.J."/>
            <person name="Zhou L."/>
            <person name="Fleischmann R.D."/>
            <person name="Sutton G.G."/>
            <person name="Blake J.A."/>
            <person name="FitzGerald L.M."/>
            <person name="Clayton R.A."/>
            <person name="Gocayne J.D."/>
            <person name="Kerlavage A.R."/>
            <person name="Dougherty B.A."/>
            <person name="Tomb J.-F."/>
            <person name="Adams M.D."/>
            <person name="Reich C.I."/>
            <person name="Overbeek R."/>
            <person name="Kirkness E.F."/>
            <person name="Weinstock K.G."/>
            <person name="Merrick J.M."/>
            <person name="Glodek A."/>
            <person name="Scott J.L."/>
            <person name="Geoghagen N.S.M."/>
            <person name="Weidman J.F."/>
            <person name="Fuhrmann J.L."/>
            <person name="Nguyen D."/>
            <person name="Utterback T.R."/>
            <person name="Kelley J.M."/>
            <person name="Peterson J.D."/>
            <person name="Sadow P.W."/>
            <person name="Hanna M.C."/>
            <person name="Cotton M.D."/>
            <person name="Roberts K.M."/>
            <person name="Hurst M.A."/>
            <person name="Kaine B.P."/>
            <person name="Borodovsky M."/>
            <person name="Klenk H.-P."/>
            <person name="Fraser C.M."/>
            <person name="Smith H.O."/>
            <person name="Woese C.R."/>
            <person name="Venter J.C."/>
        </authorList>
    </citation>
    <scope>NUCLEOTIDE SEQUENCE [LARGE SCALE GENOMIC DNA]</scope>
    <source>
        <strain>ATCC 43067 / DSM 2661 / JAL-1 / JCM 10045 / NBRC 100440</strain>
    </source>
</reference>
<reference key="2">
    <citation type="journal article" date="2003" name="Nucleic Acids Res.">
        <title>A nomenclature for restriction enzymes, DNA methyltransferases, homing endonucleases and their genes.</title>
        <authorList>
            <person name="Roberts R.J."/>
            <person name="Belfort M."/>
            <person name="Bestor T."/>
            <person name="Bhagwat A.S."/>
            <person name="Bickle T.A."/>
            <person name="Bitinaite J."/>
            <person name="Blumenthal R.M."/>
            <person name="Degtyarev S.K."/>
            <person name="Dryden D.T."/>
            <person name="Dybvig K."/>
            <person name="Firman K."/>
            <person name="Gromova E.S."/>
            <person name="Gumport R.I."/>
            <person name="Halford S.E."/>
            <person name="Hattman S."/>
            <person name="Heitman J."/>
            <person name="Hornby D.P."/>
            <person name="Janulaitis A."/>
            <person name="Jeltsch A."/>
            <person name="Josephsen J."/>
            <person name="Kiss A."/>
            <person name="Klaenhammer T.R."/>
            <person name="Kobayashi I."/>
            <person name="Kong H."/>
            <person name="Krueger D.H."/>
            <person name="Lacks S."/>
            <person name="Marinus M.G."/>
            <person name="Miyahara M."/>
            <person name="Morgan R.D."/>
            <person name="Murray N.E."/>
            <person name="Nagaraja V."/>
            <person name="Piekarowicz A."/>
            <person name="Pingoud A."/>
            <person name="Raleigh E."/>
            <person name="Rao D.N."/>
            <person name="Reich N."/>
            <person name="Repin V.E."/>
            <person name="Selker E.U."/>
            <person name="Shaw P.C."/>
            <person name="Stein D.C."/>
            <person name="Stoddard B.L."/>
            <person name="Szybalski W."/>
            <person name="Trautner T.A."/>
            <person name="Van Etten J.L."/>
            <person name="Vitor J.M."/>
            <person name="Wilson G.G."/>
            <person name="Xu S.Y."/>
        </authorList>
    </citation>
    <scope>NOMENCLATURE</scope>
</reference>
<protein>
    <recommendedName>
        <fullName>Type I restriction enzyme MjaVIII methylase subunit</fullName>
        <shortName>M protein</shortName>
        <ecNumber evidence="1">2.1.1.72</ecNumber>
    </recommendedName>
    <alternativeName>
        <fullName evidence="3">Type I methyltransferase M.MjaVIII</fullName>
        <shortName evidence="3">M.MjaVIII</shortName>
    </alternativeName>
</protein>
<organism>
    <name type="scientific">Methanocaldococcus jannaschii (strain ATCC 43067 / DSM 2661 / JAL-1 / JCM 10045 / NBRC 100440)</name>
    <name type="common">Methanococcus jannaschii</name>
    <dbReference type="NCBI Taxonomy" id="243232"/>
    <lineage>
        <taxon>Archaea</taxon>
        <taxon>Methanobacteriati</taxon>
        <taxon>Methanobacteriota</taxon>
        <taxon>Methanomada group</taxon>
        <taxon>Methanococci</taxon>
        <taxon>Methanococcales</taxon>
        <taxon>Methanocaldococcaceae</taxon>
        <taxon>Methanocaldococcus</taxon>
    </lineage>
</organism>
<keyword id="KW-0238">DNA-binding</keyword>
<keyword id="KW-0489">Methyltransferase</keyword>
<keyword id="KW-1185">Reference proteome</keyword>
<keyword id="KW-0680">Restriction system</keyword>
<keyword id="KW-0949">S-adenosyl-L-methionine</keyword>
<keyword id="KW-0808">Transferase</keyword>
<comment type="function">
    <text evidence="1 3">The subtype gamma methyltransferase (M) subunit of a type I restriction enzyme. The M and S subunits together form a methyltransferase (MTase) that methylates A-2 on the top and A-3 on the bottom strand of the sequence 5'-GAYN(5)GTAA-3'. In the presence of the R subunit the complex can also act as an endonuclease, binding to the same target sequence but cutting the DNA some distance from this site. Whether the DNA is cut or modified depends on the methylation state of the target sequence. When the target site is unmodified, the DNA is cut. When the target site is hemimethylated, the complex acts as a maintenance MTase modifying the DNA so that both strands become methylated. After locating a non-methylated recognition site, the enzyme complex serves as a molecular motor that translocates DNA in an ATP-dependent manner until a collision occurs that triggers cleavage.</text>
</comment>
<comment type="catalytic activity">
    <reaction evidence="1">
        <text>a 2'-deoxyadenosine in DNA + S-adenosyl-L-methionine = an N(6)-methyl-2'-deoxyadenosine in DNA + S-adenosyl-L-homocysteine + H(+)</text>
        <dbReference type="Rhea" id="RHEA:15197"/>
        <dbReference type="Rhea" id="RHEA-COMP:12418"/>
        <dbReference type="Rhea" id="RHEA-COMP:12419"/>
        <dbReference type="ChEBI" id="CHEBI:15378"/>
        <dbReference type="ChEBI" id="CHEBI:57856"/>
        <dbReference type="ChEBI" id="CHEBI:59789"/>
        <dbReference type="ChEBI" id="CHEBI:90615"/>
        <dbReference type="ChEBI" id="CHEBI:90616"/>
        <dbReference type="EC" id="2.1.1.72"/>
    </reaction>
</comment>
<comment type="subunit">
    <text evidence="1">The type I restriction/modification system is composed of three polypeptides R, M and S.</text>
</comment>
<comment type="miscellaneous">
    <text evidence="1">Type I restriction and modification enzymes are complex, multifunctional systems which require ATP, S-adenosyl methionine and Mg(2+) as cofactors and, in addition to their endonucleolytic and methylase activities, are potent DNA-dependent ATPases.</text>
</comment>
<comment type="similarity">
    <text evidence="4">Belongs to the N(4)/N(6)-methyltransferase family.</text>
</comment>
<sequence>MKLRNVEPRFLKAYNILMDKFGLFPFTYDMAEKVLKDNYENVNEVLSKLADAGLLEKTAKKEDKRKKIYKIKPLTTEKIEKVSKDKLIGLLKQGADLIRTQVDYKVLLLFLFFKAISDKYLLKVEELKKEFEDLDEEDIYVLANEEILELYDVEGKKLYVWHEVANNPEDFINALNKIVEMNKEKLSGLDELIKRTGLPTLFENENRHIVQHLINLFSRADFSEASYDILGDAYEWTLNYFAPTKAKEGEVYTPIEVSKLIAHLVEPKDDEVILDPACGSGSMLIEQYRFAGSNPNIVLVGQERNDVTAVLAKLNFILHGINLKDAKVFIGDSLLNPKFESFIXEVKGTGKADKVVANPPWNQDGYDENTLKVNEKYKDIYMYGFPNKNSADWAWVQLINYYTEKKAGIVLDSGALFRGGKEKTIRKRFVDDDLIEAVVLLPEKLFYNCPAPGIILILNKNKPEERKGKILFINASNEYIKHPEVKKLNKLSDENIEKIAKAYKEFKDVDGFCKVVDIEEIRKNDYNLNVSLYISPIEEDEDVDLGEVYEELNKLHNEYLEKFEVVKGYLEEINGLIK</sequence>
<gene>
    <name type="ordered locus">MJ1220</name>
</gene>